<evidence type="ECO:0000255" key="1">
    <source>
        <dbReference type="HAMAP-Rule" id="MF_01307"/>
    </source>
</evidence>
<evidence type="ECO:0000305" key="2"/>
<gene>
    <name evidence="1" type="primary">rps5</name>
    <name type="ordered locus">VNG_1715G</name>
</gene>
<sequence length="212" mass="23008">MSYNDTWQPKTRLGGLVQDGEVEDMSEALDTGLPLKEPEIVDQLLPGLDDEVLDINMVQRMTDSGRRVKFRCVVAIGNRDGYVGYAEGRDDQVGGAIQKAIEVAKLNIIDVSRGCGSWECGCGRPHTVALKSTGKAGSVDVELMPAPRGLGLAGGETVQHVLELAGIDDVWTRSSGKTRTTVNFAKATFNALRETSEARVPQHAREEREVIE</sequence>
<keyword id="KW-1185">Reference proteome</keyword>
<keyword id="KW-0687">Ribonucleoprotein</keyword>
<keyword id="KW-0689">Ribosomal protein</keyword>
<keyword id="KW-0694">RNA-binding</keyword>
<keyword id="KW-0699">rRNA-binding</keyword>
<protein>
    <recommendedName>
        <fullName evidence="1">Small ribosomal subunit protein uS5</fullName>
    </recommendedName>
    <alternativeName>
        <fullName evidence="2">30S ribosomal protein S5</fullName>
    </alternativeName>
</protein>
<dbReference type="EMBL" id="AE004437">
    <property type="protein sequence ID" value="AAG19956.1"/>
    <property type="molecule type" value="Genomic_DNA"/>
</dbReference>
<dbReference type="PIR" id="H84323">
    <property type="entry name" value="H84323"/>
</dbReference>
<dbReference type="RefSeq" id="WP_010903254.1">
    <property type="nucleotide sequence ID" value="NC_002607.1"/>
</dbReference>
<dbReference type="SMR" id="Q9HPB4"/>
<dbReference type="FunCoup" id="Q9HPB4">
    <property type="interactions" value="161"/>
</dbReference>
<dbReference type="STRING" id="64091.VNG_1715G"/>
<dbReference type="PaxDb" id="64091-VNG_1715G"/>
<dbReference type="KEGG" id="hal:VNG_1715G"/>
<dbReference type="PATRIC" id="fig|64091.14.peg.1308"/>
<dbReference type="HOGENOM" id="CLU_065898_0_1_2"/>
<dbReference type="InParanoid" id="Q9HPB4"/>
<dbReference type="OrthoDB" id="38155at2157"/>
<dbReference type="PhylomeDB" id="Q9HPB4"/>
<dbReference type="Proteomes" id="UP000000554">
    <property type="component" value="Chromosome"/>
</dbReference>
<dbReference type="GO" id="GO:0022627">
    <property type="term" value="C:cytosolic small ribosomal subunit"/>
    <property type="evidence" value="ECO:0000318"/>
    <property type="project" value="GO_Central"/>
</dbReference>
<dbReference type="GO" id="GO:0019843">
    <property type="term" value="F:rRNA binding"/>
    <property type="evidence" value="ECO:0007669"/>
    <property type="project" value="UniProtKB-UniRule"/>
</dbReference>
<dbReference type="GO" id="GO:0003735">
    <property type="term" value="F:structural constituent of ribosome"/>
    <property type="evidence" value="ECO:0000318"/>
    <property type="project" value="GO_Central"/>
</dbReference>
<dbReference type="GO" id="GO:0006412">
    <property type="term" value="P:translation"/>
    <property type="evidence" value="ECO:0000318"/>
    <property type="project" value="GO_Central"/>
</dbReference>
<dbReference type="FunFam" id="3.30.160.20:FF:000002">
    <property type="entry name" value="40S ribosomal protein S2"/>
    <property type="match status" value="1"/>
</dbReference>
<dbReference type="FunFam" id="3.30.230.10:FF:000004">
    <property type="entry name" value="40S ribosomal protein S2"/>
    <property type="match status" value="1"/>
</dbReference>
<dbReference type="Gene3D" id="3.30.160.20">
    <property type="match status" value="1"/>
</dbReference>
<dbReference type="Gene3D" id="3.30.230.10">
    <property type="match status" value="1"/>
</dbReference>
<dbReference type="HAMAP" id="MF_01307_A">
    <property type="entry name" value="Ribosomal_uS5_A"/>
    <property type="match status" value="1"/>
</dbReference>
<dbReference type="InterPro" id="IPR020568">
    <property type="entry name" value="Ribosomal_Su5_D2-typ_SF"/>
</dbReference>
<dbReference type="InterPro" id="IPR000851">
    <property type="entry name" value="Ribosomal_uS5"/>
</dbReference>
<dbReference type="InterPro" id="IPR047866">
    <property type="entry name" value="Ribosomal_uS5_arc"/>
</dbReference>
<dbReference type="InterPro" id="IPR005324">
    <property type="entry name" value="Ribosomal_uS5_C"/>
</dbReference>
<dbReference type="InterPro" id="IPR005711">
    <property type="entry name" value="Ribosomal_uS5_euk/arc"/>
</dbReference>
<dbReference type="InterPro" id="IPR013810">
    <property type="entry name" value="Ribosomal_uS5_N"/>
</dbReference>
<dbReference type="InterPro" id="IPR018192">
    <property type="entry name" value="Ribosomal_uS5_N_CS"/>
</dbReference>
<dbReference type="InterPro" id="IPR014721">
    <property type="entry name" value="Ribsml_uS5_D2-typ_fold_subgr"/>
</dbReference>
<dbReference type="NCBIfam" id="NF003125">
    <property type="entry name" value="PRK04044.1"/>
    <property type="match status" value="1"/>
</dbReference>
<dbReference type="NCBIfam" id="TIGR01020">
    <property type="entry name" value="uS5_euk_arch"/>
    <property type="match status" value="1"/>
</dbReference>
<dbReference type="PANTHER" id="PTHR13718:SF4">
    <property type="entry name" value="40S RIBOSOMAL PROTEIN S2"/>
    <property type="match status" value="1"/>
</dbReference>
<dbReference type="PANTHER" id="PTHR13718">
    <property type="entry name" value="RIBOSOMAL S SUBUNIT"/>
    <property type="match status" value="1"/>
</dbReference>
<dbReference type="Pfam" id="PF00333">
    <property type="entry name" value="Ribosomal_S5"/>
    <property type="match status" value="1"/>
</dbReference>
<dbReference type="Pfam" id="PF03719">
    <property type="entry name" value="Ribosomal_S5_C"/>
    <property type="match status" value="1"/>
</dbReference>
<dbReference type="SUPFAM" id="SSF54768">
    <property type="entry name" value="dsRNA-binding domain-like"/>
    <property type="match status" value="1"/>
</dbReference>
<dbReference type="SUPFAM" id="SSF54211">
    <property type="entry name" value="Ribosomal protein S5 domain 2-like"/>
    <property type="match status" value="1"/>
</dbReference>
<dbReference type="PROSITE" id="PS00585">
    <property type="entry name" value="RIBOSOMAL_S5"/>
    <property type="match status" value="1"/>
</dbReference>
<dbReference type="PROSITE" id="PS50881">
    <property type="entry name" value="S5_DSRBD"/>
    <property type="match status" value="1"/>
</dbReference>
<reference key="1">
    <citation type="journal article" date="2000" name="Proc. Natl. Acad. Sci. U.S.A.">
        <title>Genome sequence of Halobacterium species NRC-1.</title>
        <authorList>
            <person name="Ng W.V."/>
            <person name="Kennedy S.P."/>
            <person name="Mahairas G.G."/>
            <person name="Berquist B."/>
            <person name="Pan M."/>
            <person name="Shukla H.D."/>
            <person name="Lasky S.R."/>
            <person name="Baliga N.S."/>
            <person name="Thorsson V."/>
            <person name="Sbrogna J."/>
            <person name="Swartzell S."/>
            <person name="Weir D."/>
            <person name="Hall J."/>
            <person name="Dahl T.A."/>
            <person name="Welti R."/>
            <person name="Goo Y.A."/>
            <person name="Leithauser B."/>
            <person name="Keller K."/>
            <person name="Cruz R."/>
            <person name="Danson M.J."/>
            <person name="Hough D.W."/>
            <person name="Maddocks D.G."/>
            <person name="Jablonski P.E."/>
            <person name="Krebs M.P."/>
            <person name="Angevine C.M."/>
            <person name="Dale H."/>
            <person name="Isenbarger T.A."/>
            <person name="Peck R.F."/>
            <person name="Pohlschroder M."/>
            <person name="Spudich J.L."/>
            <person name="Jung K.-H."/>
            <person name="Alam M."/>
            <person name="Freitas T."/>
            <person name="Hou S."/>
            <person name="Daniels C.J."/>
            <person name="Dennis P.P."/>
            <person name="Omer A.D."/>
            <person name="Ebhardt H."/>
            <person name="Lowe T.M."/>
            <person name="Liang P."/>
            <person name="Riley M."/>
            <person name="Hood L."/>
            <person name="DasSarma S."/>
        </authorList>
    </citation>
    <scope>NUCLEOTIDE SEQUENCE [LARGE SCALE GENOMIC DNA]</scope>
    <source>
        <strain>ATCC 700922 / JCM 11081 / NRC-1</strain>
    </source>
</reference>
<comment type="function">
    <text evidence="1">With S4 and S12 plays an important role in translational accuracy.</text>
</comment>
<comment type="subunit">
    <text evidence="1">Part of the 30S ribosomal subunit. Contacts protein S4.</text>
</comment>
<comment type="domain">
    <text>The N-terminal domain interacts with the head of the 30S subunit; the C-terminal domain interacts with the body and contacts protein S4. The interaction surface between S4 and S5 is involved in control of translational fidelity.</text>
</comment>
<comment type="similarity">
    <text evidence="1">Belongs to the universal ribosomal protein uS5 family.</text>
</comment>
<proteinExistence type="inferred from homology"/>
<name>RS5_HALSA</name>
<organism>
    <name type="scientific">Halobacterium salinarum (strain ATCC 700922 / JCM 11081 / NRC-1)</name>
    <name type="common">Halobacterium halobium</name>
    <dbReference type="NCBI Taxonomy" id="64091"/>
    <lineage>
        <taxon>Archaea</taxon>
        <taxon>Methanobacteriati</taxon>
        <taxon>Methanobacteriota</taxon>
        <taxon>Stenosarchaea group</taxon>
        <taxon>Halobacteria</taxon>
        <taxon>Halobacteriales</taxon>
        <taxon>Halobacteriaceae</taxon>
        <taxon>Halobacterium</taxon>
        <taxon>Halobacterium salinarum NRC-34001</taxon>
    </lineage>
</organism>
<accession>Q9HPB4</accession>
<feature type="chain" id="PRO_0000131646" description="Small ribosomal subunit protein uS5">
    <location>
        <begin position="1"/>
        <end position="212"/>
    </location>
</feature>
<feature type="domain" description="S5 DRBM" evidence="1">
    <location>
        <begin position="48"/>
        <end position="111"/>
    </location>
</feature>